<feature type="chain" id="PRO_0000207884" description="Protein PsbN">
    <location>
        <begin position="1"/>
        <end position="44"/>
    </location>
</feature>
<feature type="transmembrane region" description="Helical" evidence="1">
    <location>
        <begin position="6"/>
        <end position="26"/>
    </location>
</feature>
<sequence length="44" mass="5210">MESPAFFFTFFLWFLLLSVTGYSVYVSFGPPSKKLRDPFEEHED</sequence>
<comment type="function">
    <text evidence="1">May play a role in photosystem I and II biogenesis.</text>
</comment>
<comment type="subcellular location">
    <subcellularLocation>
        <location evidence="1">Plastid</location>
        <location evidence="1">Chloroplast thylakoid membrane</location>
        <topology evidence="1">Single-pass membrane protein</topology>
    </subcellularLocation>
</comment>
<comment type="similarity">
    <text evidence="1">Belongs to the PsbN family.</text>
</comment>
<comment type="caution">
    <text evidence="1">Originally thought to be a component of PSII; based on experiments in Synechocystis, N.tabacum and barley, and its absence from PSII in T.elongatus and T.vulcanus, this is probably not true.</text>
</comment>
<evidence type="ECO:0000255" key="1">
    <source>
        <dbReference type="HAMAP-Rule" id="MF_00293"/>
    </source>
</evidence>
<accession>Q06480</accession>
<accession>B7U1H2</accession>
<protein>
    <recommendedName>
        <fullName evidence="1">Protein PsbN</fullName>
    </recommendedName>
</protein>
<dbReference type="EMBL" id="L13303">
    <property type="protein sequence ID" value="AAA02860.1"/>
    <property type="molecule type" value="Genomic_DNA"/>
</dbReference>
<dbReference type="EMBL" id="FJ423446">
    <property type="protein sequence ID" value="ACJ50119.1"/>
    <property type="molecule type" value="Genomic_DNA"/>
</dbReference>
<dbReference type="EMBL" id="BK000554">
    <property type="protein sequence ID" value="DAA00931.1"/>
    <property type="molecule type" value="Genomic_DNA"/>
</dbReference>
<dbReference type="PIR" id="S35146">
    <property type="entry name" value="S35146"/>
</dbReference>
<dbReference type="RefSeq" id="NP_958386.1">
    <property type="nucleotide sequence ID" value="NC_005353.1"/>
</dbReference>
<dbReference type="SMR" id="Q06480"/>
<dbReference type="FunCoup" id="Q06480">
    <property type="interactions" value="33"/>
</dbReference>
<dbReference type="STRING" id="3055.Q06480"/>
<dbReference type="PaxDb" id="3055-DAA00931"/>
<dbReference type="GeneID" id="2717031"/>
<dbReference type="KEGG" id="cre:ChreCp030"/>
<dbReference type="eggNOG" id="ENOG502R33S">
    <property type="taxonomic scope" value="Eukaryota"/>
</dbReference>
<dbReference type="HOGENOM" id="CLU_205504_0_0_1"/>
<dbReference type="InParanoid" id="Q06480"/>
<dbReference type="Proteomes" id="UP000006906">
    <property type="component" value="Chloroplast"/>
</dbReference>
<dbReference type="GO" id="GO:0009535">
    <property type="term" value="C:chloroplast thylakoid membrane"/>
    <property type="evidence" value="ECO:0007669"/>
    <property type="project" value="UniProtKB-SubCell"/>
</dbReference>
<dbReference type="GO" id="GO:0015979">
    <property type="term" value="P:photosynthesis"/>
    <property type="evidence" value="ECO:0007669"/>
    <property type="project" value="InterPro"/>
</dbReference>
<dbReference type="HAMAP" id="MF_00293">
    <property type="entry name" value="PSII_PsbN"/>
    <property type="match status" value="1"/>
</dbReference>
<dbReference type="InterPro" id="IPR003398">
    <property type="entry name" value="PSII_PsbN"/>
</dbReference>
<dbReference type="PANTHER" id="PTHR35326">
    <property type="entry name" value="PROTEIN PSBN"/>
    <property type="match status" value="1"/>
</dbReference>
<dbReference type="PANTHER" id="PTHR35326:SF3">
    <property type="entry name" value="PROTEIN PSBN"/>
    <property type="match status" value="1"/>
</dbReference>
<dbReference type="Pfam" id="PF02468">
    <property type="entry name" value="PsbN"/>
    <property type="match status" value="1"/>
</dbReference>
<keyword id="KW-0150">Chloroplast</keyword>
<keyword id="KW-0472">Membrane</keyword>
<keyword id="KW-0934">Plastid</keyword>
<keyword id="KW-1185">Reference proteome</keyword>
<keyword id="KW-0793">Thylakoid</keyword>
<keyword id="KW-0812">Transmembrane</keyword>
<keyword id="KW-1133">Transmembrane helix</keyword>
<proteinExistence type="inferred from homology"/>
<reference key="1">
    <citation type="journal article" date="1993" name="Plant Mol. Biol.">
        <title>The psbB gene cluster of the Chlamydomonas reinhardtii chloroplast: sequence and transcriptional analyses of psbN and psbH.</title>
        <authorList>
            <person name="Johnson C.H."/>
            <person name="Schmidt G.W."/>
        </authorList>
    </citation>
    <scope>NUCLEOTIDE SEQUENCE [GENOMIC DNA]</scope>
</reference>
<reference key="2">
    <citation type="journal article" date="2009" name="BMC Evol. Biol.">
        <title>Nucleotide diversity of the Chlamydomonas reinhardtii plastid genome: addressing the mutational-hazard hypothesis.</title>
        <authorList>
            <person name="Smith D.R."/>
            <person name="Lee R.W."/>
        </authorList>
    </citation>
    <scope>NUCLEOTIDE SEQUENCE [LARGE SCALE GENOMIC DNA]</scope>
    <source>
        <strain>CC-503</strain>
    </source>
</reference>
<reference key="3">
    <citation type="journal article" date="2002" name="Plant Cell">
        <title>The Chlamydomonas reinhardtii plastid chromosome: islands of genes in a sea of repeats.</title>
        <authorList>
            <person name="Maul J.E."/>
            <person name="Lilly J.W."/>
            <person name="Cui L."/>
            <person name="dePamphilis C.W."/>
            <person name="Miller W."/>
            <person name="Harris E.H."/>
            <person name="Stern D.B."/>
        </authorList>
    </citation>
    <scope>IDENTIFICATION</scope>
    <scope>COMPLETE PLASTID GENOME</scope>
</reference>
<name>PSBN_CHLRE</name>
<geneLocation type="chloroplast"/>
<organism>
    <name type="scientific">Chlamydomonas reinhardtii</name>
    <name type="common">Chlamydomonas smithii</name>
    <dbReference type="NCBI Taxonomy" id="3055"/>
    <lineage>
        <taxon>Eukaryota</taxon>
        <taxon>Viridiplantae</taxon>
        <taxon>Chlorophyta</taxon>
        <taxon>core chlorophytes</taxon>
        <taxon>Chlorophyceae</taxon>
        <taxon>CS clade</taxon>
        <taxon>Chlamydomonadales</taxon>
        <taxon>Chlamydomonadaceae</taxon>
        <taxon>Chlamydomonas</taxon>
    </lineage>
</organism>
<gene>
    <name evidence="1" type="primary">psbN</name>
</gene>